<name>ANFD_HELGE</name>
<accession>O68955</accession>
<sequence>SERGCAYCGAKHVIGTPMKDVIHISHGPVGCTYDTWQTKRYISDNDNFQLKYTYATDMKEKHIVFGAEKLLKKNIIEAFQAFPDIKRMTIYQTCASALIGDDINAIAQEVMDELPDVDIFVCNSPGFAGPSQSGGHHKINIAWIDQKVGTVEPKITSDYVINYVGEYNIQGDQEVMLDYFKRMGIQVLSTFTGNGSYDDLRAMHRAHLNVLECARSAEYICNELRVRYGIPRLDIDGFGFEPLSTSLRKIGLFFGIEDRAQAIIEEETARWKPELDWYKE</sequence>
<proteinExistence type="inferred from homology"/>
<gene>
    <name type="primary">anfD</name>
</gene>
<protein>
    <recommendedName>
        <fullName>Nitrogenase iron-iron protein alpha chain</fullName>
        <ecNumber>1.18.6.1</ecNumber>
    </recommendedName>
    <alternativeName>
        <fullName>Dinitrogenase 3 subunit alpha</fullName>
    </alternativeName>
    <alternativeName>
        <fullName>Nitrogenase component I</fullName>
    </alternativeName>
</protein>
<feature type="chain" id="PRO_0000153067" description="Nitrogenase iron-iron protein alpha chain">
    <location>
        <begin position="1" status="less than"/>
        <end position="280" status="greater than"/>
    </location>
</feature>
<feature type="binding site" evidence="1">
    <location>
        <position position="5"/>
    </location>
    <ligand>
        <name>[8Fe-7S] cluster</name>
        <dbReference type="ChEBI" id="CHEBI:21143"/>
        <note>ligand shared with beta chain</note>
    </ligand>
</feature>
<feature type="binding site" evidence="1">
    <location>
        <position position="31"/>
    </location>
    <ligand>
        <name>[8Fe-7S] cluster</name>
        <dbReference type="ChEBI" id="CHEBI:21143"/>
        <note>ligand shared with beta chain</note>
    </ligand>
</feature>
<feature type="binding site" evidence="1">
    <location>
        <position position="94"/>
    </location>
    <ligand>
        <name>[8Fe-7S] cluster</name>
        <dbReference type="ChEBI" id="CHEBI:21143"/>
        <note>ligand shared with beta chain</note>
    </ligand>
</feature>
<feature type="binding site" evidence="1">
    <location>
        <position position="213"/>
    </location>
    <ligand>
        <name>[8Fe-9S-C-homocitryl] cluster</name>
        <dbReference type="ChEBI" id="CHEBI:60504"/>
    </ligand>
</feature>
<feature type="non-terminal residue">
    <location>
        <position position="1"/>
    </location>
</feature>
<feature type="non-terminal residue">
    <location>
        <position position="280"/>
    </location>
</feature>
<organism>
    <name type="scientific">Heliomicrobium gestii</name>
    <name type="common">Heliobacterium gestii</name>
    <dbReference type="NCBI Taxonomy" id="2699"/>
    <lineage>
        <taxon>Bacteria</taxon>
        <taxon>Bacillati</taxon>
        <taxon>Bacillota</taxon>
        <taxon>Clostridia</taxon>
        <taxon>Eubacteriales</taxon>
        <taxon>Heliobacteriaceae</taxon>
        <taxon>Heliomicrobium</taxon>
    </lineage>
</organism>
<evidence type="ECO:0000250" key="1"/>
<evidence type="ECO:0000305" key="2"/>
<dbReference type="EC" id="1.18.6.1"/>
<dbReference type="EMBL" id="AF058785">
    <property type="protein sequence ID" value="AAC14342.1"/>
    <property type="molecule type" value="Genomic_DNA"/>
</dbReference>
<dbReference type="SMR" id="O68955"/>
<dbReference type="GO" id="GO:0005524">
    <property type="term" value="F:ATP binding"/>
    <property type="evidence" value="ECO:0007669"/>
    <property type="project" value="UniProtKB-KW"/>
</dbReference>
<dbReference type="GO" id="GO:0051536">
    <property type="term" value="F:iron-sulfur cluster binding"/>
    <property type="evidence" value="ECO:0007669"/>
    <property type="project" value="UniProtKB-KW"/>
</dbReference>
<dbReference type="GO" id="GO:0046872">
    <property type="term" value="F:metal ion binding"/>
    <property type="evidence" value="ECO:0007669"/>
    <property type="project" value="UniProtKB-KW"/>
</dbReference>
<dbReference type="GO" id="GO:0016163">
    <property type="term" value="F:nitrogenase activity"/>
    <property type="evidence" value="ECO:0007669"/>
    <property type="project" value="UniProtKB-EC"/>
</dbReference>
<dbReference type="GO" id="GO:0009399">
    <property type="term" value="P:nitrogen fixation"/>
    <property type="evidence" value="ECO:0007669"/>
    <property type="project" value="UniProtKB-KW"/>
</dbReference>
<dbReference type="Gene3D" id="3.40.50.1980">
    <property type="entry name" value="Nitrogenase molybdenum iron protein domain"/>
    <property type="match status" value="2"/>
</dbReference>
<dbReference type="InterPro" id="IPR000510">
    <property type="entry name" value="Nase/OxRdtase_comp1"/>
</dbReference>
<dbReference type="InterPro" id="IPR005974">
    <property type="entry name" value="Nase_asu"/>
</dbReference>
<dbReference type="InterPro" id="IPR010143">
    <property type="entry name" value="Nase_comp1_asu"/>
</dbReference>
<dbReference type="InterPro" id="IPR000318">
    <property type="entry name" value="Nase_comp1_CS"/>
</dbReference>
<dbReference type="NCBIfam" id="TIGR01284">
    <property type="entry name" value="alt_nitrog_alph"/>
    <property type="match status" value="1"/>
</dbReference>
<dbReference type="PANTHER" id="PTHR43457">
    <property type="entry name" value="NITROGENASE MOLYBDENUM-IRON PROTEIN ALPHA CHAIN"/>
    <property type="match status" value="1"/>
</dbReference>
<dbReference type="PANTHER" id="PTHR43457:SF1">
    <property type="entry name" value="NITROGENASE MOLYBDENUM-IRON PROTEIN ALPHA CHAIN"/>
    <property type="match status" value="1"/>
</dbReference>
<dbReference type="Pfam" id="PF00148">
    <property type="entry name" value="Oxidored_nitro"/>
    <property type="match status" value="1"/>
</dbReference>
<dbReference type="SUPFAM" id="SSF53807">
    <property type="entry name" value="Helical backbone' metal receptor"/>
    <property type="match status" value="1"/>
</dbReference>
<dbReference type="PROSITE" id="PS00699">
    <property type="entry name" value="NITROGENASE_1_1"/>
    <property type="match status" value="1"/>
</dbReference>
<dbReference type="PROSITE" id="PS00090">
    <property type="entry name" value="NITROGENASE_1_2"/>
    <property type="match status" value="1"/>
</dbReference>
<reference key="1">
    <citation type="journal article" date="1999" name="Can. J. Microbiol.">
        <title>Identification of genes unique to Mo-independent nitrogenase systems in diverse diazotrophs.</title>
        <authorList>
            <person name="Loveless T.M."/>
            <person name="Bishop P.E."/>
        </authorList>
    </citation>
    <scope>NUCLEOTIDE SEQUENCE [GENOMIC DNA]</scope>
</reference>
<keyword id="KW-0067">ATP-binding</keyword>
<keyword id="KW-0408">Iron</keyword>
<keyword id="KW-0411">Iron-sulfur</keyword>
<keyword id="KW-0479">Metal-binding</keyword>
<keyword id="KW-0535">Nitrogen fixation</keyword>
<keyword id="KW-0547">Nucleotide-binding</keyword>
<keyword id="KW-0560">Oxidoreductase</keyword>
<comment type="function">
    <text>This iron-iron protein is part of the nitrogenase complex that catalyzes the key enzymatic reactions in nitrogen fixation. Other nitrogenase complexes utilize a molybdenum-iron protein or a vanadium-iron protein.</text>
</comment>
<comment type="catalytic activity">
    <reaction>
        <text>N2 + 8 reduced [2Fe-2S]-[ferredoxin] + 16 ATP + 16 H2O = H2 + 8 oxidized [2Fe-2S]-[ferredoxin] + 2 NH4(+) + 16 ADP + 16 phosphate + 6 H(+)</text>
        <dbReference type="Rhea" id="RHEA:21448"/>
        <dbReference type="Rhea" id="RHEA-COMP:10000"/>
        <dbReference type="Rhea" id="RHEA-COMP:10001"/>
        <dbReference type="ChEBI" id="CHEBI:15377"/>
        <dbReference type="ChEBI" id="CHEBI:15378"/>
        <dbReference type="ChEBI" id="CHEBI:17997"/>
        <dbReference type="ChEBI" id="CHEBI:18276"/>
        <dbReference type="ChEBI" id="CHEBI:28938"/>
        <dbReference type="ChEBI" id="CHEBI:30616"/>
        <dbReference type="ChEBI" id="CHEBI:33737"/>
        <dbReference type="ChEBI" id="CHEBI:33738"/>
        <dbReference type="ChEBI" id="CHEBI:43474"/>
        <dbReference type="ChEBI" id="CHEBI:456216"/>
        <dbReference type="EC" id="1.18.6.1"/>
    </reaction>
</comment>
<comment type="cofactor">
    <cofactor evidence="1">
        <name>[8Fe-7S] cluster</name>
        <dbReference type="ChEBI" id="CHEBI:21143"/>
    </cofactor>
    <text evidence="1">Binds 1 [8Fe-7S] cluster per heterodimer.</text>
</comment>
<comment type="cofactor">
    <cofactor evidence="1">
        <name>[8Fe-9S-C-homocitryl] cluster</name>
        <dbReference type="ChEBI" id="CHEBI:60504"/>
    </cofactor>
    <text evidence="1">Binds 1 [8Fe-9S-C-homocitryl] cluster per subunit.</text>
</comment>
<comment type="subunit">
    <text evidence="1">Hexamer of two alpha, two beta, and two delta chains.</text>
</comment>
<comment type="miscellaneous">
    <text>The structure of the 8Fe-9S-C-homocitryl cluster is assumed to be analogous to the 7Fe-Mo-9S-C-homocitryl cluster.</text>
</comment>
<comment type="similarity">
    <text evidence="2">Belongs to the NifD/NifK/NifE/NifN family.</text>
</comment>